<organismHost>
    <name type="scientific">Orgyia pseudotsugata</name>
    <name type="common">Douglas-fir tussock moth</name>
    <dbReference type="NCBI Taxonomy" id="33414"/>
</organismHost>
<gene>
    <name type="ORF">ORF130</name>
</gene>
<reference key="1">
    <citation type="journal article" date="1989" name="J. Gen. Virol.">
        <title>Characterization of the genetic organization of the HindIII M region of the multicapsid nuclear polyhedrosis virus of Orgyia pseudotsugata reveals major differences among baculoviruses.</title>
        <authorList>
            <person name="Gombart A.F."/>
            <person name="Blissard G.W."/>
            <person name="Rohrmann G.F."/>
        </authorList>
    </citation>
    <scope>NUCLEOTIDE SEQUENCE [GENOMIC DNA]</scope>
</reference>
<reference key="2">
    <citation type="journal article" date="1997" name="Virology">
        <title>The sequence of the Orgyia pseudotsugata multinucleocapsid nuclear polyhedrosis virus genome.</title>
        <authorList>
            <person name="Ahrens C.H."/>
            <person name="Russell R.R."/>
            <person name="Funk C.J."/>
            <person name="Evans J."/>
            <person name="Harwood S."/>
            <person name="Rohrmann G.F."/>
        </authorList>
    </citation>
    <scope>NUCLEOTIDE SEQUENCE [LARGE SCALE GENOMIC DNA]</scope>
</reference>
<evidence type="ECO:0000256" key="1">
    <source>
        <dbReference type="SAM" id="MobiDB-lite"/>
    </source>
</evidence>
<sequence length="228" mass="25962">MPRDTKPYSRPANAPRPGVKTERSNQFKAASTKYGKRVNDANKETRPVAFVDIKLNHRATPEMEQRMQAVYARQKPSIFNKSAVAEFIKNRTFVVAFAHPTYTIQFNKIPTVDQLRVYCSNINKDLLFKDKNQQMRNALPNAASFRVQINDEPLFKVQTVVYDKESAQLVLTIRFLPRQTMELLPMKKCVVYLNILSNASVDWAVPADLLRAFAKLALAPPIPAPQNV</sequence>
<accession>P24080</accession>
<feature type="chain" id="PRO_0000133065" description="Uncharacterized 26.0 kDa protein in PP34-EXO intergenic region">
    <location>
        <begin position="1"/>
        <end position="228"/>
    </location>
</feature>
<feature type="region of interest" description="Disordered" evidence="1">
    <location>
        <begin position="1"/>
        <end position="34"/>
    </location>
</feature>
<dbReference type="EMBL" id="D13796">
    <property type="protein sequence ID" value="BAA02952.1"/>
    <property type="molecule type" value="Genomic_DNA"/>
</dbReference>
<dbReference type="EMBL" id="D13929">
    <property type="protein sequence ID" value="BAA03030.1"/>
    <property type="molecule type" value="Genomic_DNA"/>
</dbReference>
<dbReference type="EMBL" id="U75930">
    <property type="protein sequence ID" value="AAC59129.1"/>
    <property type="molecule type" value="Genomic_DNA"/>
</dbReference>
<dbReference type="PIR" id="D30857">
    <property type="entry name" value="D30857"/>
</dbReference>
<dbReference type="RefSeq" id="NP_046286.1">
    <property type="nucleotide sequence ID" value="NC_001875.2"/>
</dbReference>
<dbReference type="SMR" id="P24080"/>
<dbReference type="KEGG" id="vg:912013"/>
<dbReference type="OrthoDB" id="10911at10239"/>
<dbReference type="Proteomes" id="UP000009248">
    <property type="component" value="Genome"/>
</dbReference>
<proteinExistence type="predicted"/>
<keyword id="KW-0426">Late protein</keyword>
<keyword id="KW-1185">Reference proteome</keyword>
<name>Y132_NPVOP</name>
<organism>
    <name type="scientific">Orgyia pseudotsugata multicapsid polyhedrosis virus</name>
    <name type="common">OpMNPV</name>
    <dbReference type="NCBI Taxonomy" id="262177"/>
    <lineage>
        <taxon>Viruses</taxon>
        <taxon>Viruses incertae sedis</taxon>
        <taxon>Naldaviricetes</taxon>
        <taxon>Lefavirales</taxon>
        <taxon>Baculoviridae</taxon>
        <taxon>Alphabaculovirus</taxon>
        <taxon>Alphabaculovirus orpseudotsugatae</taxon>
    </lineage>
</organism>
<protein>
    <recommendedName>
        <fullName>Uncharacterized 26.0 kDa protein in PP34-EXO intergenic region</fullName>
    </recommendedName>
</protein>